<evidence type="ECO:0000255" key="1">
    <source>
        <dbReference type="HAMAP-Rule" id="MF_00073"/>
    </source>
</evidence>
<name>NUSB_BURCH</name>
<comment type="function">
    <text evidence="1">Involved in transcription antitermination. Required for transcription of ribosomal RNA (rRNA) genes. Binds specifically to the boxA antiterminator sequence of the ribosomal RNA (rrn) operons.</text>
</comment>
<comment type="similarity">
    <text evidence="1">Belongs to the NusB family.</text>
</comment>
<gene>
    <name evidence="1" type="primary">nusB</name>
    <name type="ordered locus">Bcen2424_0955</name>
</gene>
<feature type="chain" id="PRO_1000023711" description="Transcription antitermination protein NusB">
    <location>
        <begin position="1"/>
        <end position="145"/>
    </location>
</feature>
<protein>
    <recommendedName>
        <fullName evidence="1">Transcription antitermination protein NusB</fullName>
    </recommendedName>
    <alternativeName>
        <fullName evidence="1">Antitermination factor NusB</fullName>
    </alternativeName>
</protein>
<dbReference type="EMBL" id="CP000458">
    <property type="protein sequence ID" value="ABK07708.1"/>
    <property type="molecule type" value="Genomic_DNA"/>
</dbReference>
<dbReference type="RefSeq" id="WP_006476662.1">
    <property type="nucleotide sequence ID" value="NC_008542.1"/>
</dbReference>
<dbReference type="SMR" id="A0K5D1"/>
<dbReference type="GeneID" id="83047707"/>
<dbReference type="KEGG" id="bch:Bcen2424_0955"/>
<dbReference type="HOGENOM" id="CLU_087843_4_1_4"/>
<dbReference type="GO" id="GO:0005829">
    <property type="term" value="C:cytosol"/>
    <property type="evidence" value="ECO:0007669"/>
    <property type="project" value="TreeGrafter"/>
</dbReference>
<dbReference type="GO" id="GO:0003723">
    <property type="term" value="F:RNA binding"/>
    <property type="evidence" value="ECO:0007669"/>
    <property type="project" value="UniProtKB-UniRule"/>
</dbReference>
<dbReference type="GO" id="GO:0006353">
    <property type="term" value="P:DNA-templated transcription termination"/>
    <property type="evidence" value="ECO:0007669"/>
    <property type="project" value="UniProtKB-UniRule"/>
</dbReference>
<dbReference type="GO" id="GO:0031564">
    <property type="term" value="P:transcription antitermination"/>
    <property type="evidence" value="ECO:0007669"/>
    <property type="project" value="UniProtKB-KW"/>
</dbReference>
<dbReference type="Gene3D" id="1.10.940.10">
    <property type="entry name" value="NusB-like"/>
    <property type="match status" value="1"/>
</dbReference>
<dbReference type="HAMAP" id="MF_00073">
    <property type="entry name" value="NusB"/>
    <property type="match status" value="1"/>
</dbReference>
<dbReference type="InterPro" id="IPR035926">
    <property type="entry name" value="NusB-like_sf"/>
</dbReference>
<dbReference type="InterPro" id="IPR011605">
    <property type="entry name" value="NusB_fam"/>
</dbReference>
<dbReference type="InterPro" id="IPR006027">
    <property type="entry name" value="NusB_RsmB_TIM44"/>
</dbReference>
<dbReference type="NCBIfam" id="TIGR01951">
    <property type="entry name" value="nusB"/>
    <property type="match status" value="1"/>
</dbReference>
<dbReference type="PANTHER" id="PTHR11078:SF3">
    <property type="entry name" value="ANTITERMINATION NUSB DOMAIN-CONTAINING PROTEIN"/>
    <property type="match status" value="1"/>
</dbReference>
<dbReference type="PANTHER" id="PTHR11078">
    <property type="entry name" value="N UTILIZATION SUBSTANCE PROTEIN B-RELATED"/>
    <property type="match status" value="1"/>
</dbReference>
<dbReference type="Pfam" id="PF01029">
    <property type="entry name" value="NusB"/>
    <property type="match status" value="1"/>
</dbReference>
<dbReference type="SUPFAM" id="SSF48013">
    <property type="entry name" value="NusB-like"/>
    <property type="match status" value="1"/>
</dbReference>
<keyword id="KW-0694">RNA-binding</keyword>
<keyword id="KW-0804">Transcription</keyword>
<keyword id="KW-0889">Transcription antitermination</keyword>
<keyword id="KW-0805">Transcription regulation</keyword>
<sequence>MKKSARRQSRELATQGLYQWLLSNAPSGEIDAQLRGALGYDKADKELLEAILHGVIREHATLVEALAPSLDRPIDQLSPVERAVLLIATFELTHHVETPYRVIINEAVELAKTFGGSDGYKYVNGVLDKLAAKLRPAETQARRNG</sequence>
<organism>
    <name type="scientific">Burkholderia cenocepacia (strain HI2424)</name>
    <dbReference type="NCBI Taxonomy" id="331272"/>
    <lineage>
        <taxon>Bacteria</taxon>
        <taxon>Pseudomonadati</taxon>
        <taxon>Pseudomonadota</taxon>
        <taxon>Betaproteobacteria</taxon>
        <taxon>Burkholderiales</taxon>
        <taxon>Burkholderiaceae</taxon>
        <taxon>Burkholderia</taxon>
        <taxon>Burkholderia cepacia complex</taxon>
    </lineage>
</organism>
<accession>A0K5D1</accession>
<proteinExistence type="inferred from homology"/>
<reference key="1">
    <citation type="submission" date="2006-08" db="EMBL/GenBank/DDBJ databases">
        <title>Complete sequence of chromosome 1 of Burkholderia cenocepacia HI2424.</title>
        <authorList>
            <person name="Copeland A."/>
            <person name="Lucas S."/>
            <person name="Lapidus A."/>
            <person name="Barry K."/>
            <person name="Detter J.C."/>
            <person name="Glavina del Rio T."/>
            <person name="Hammon N."/>
            <person name="Israni S."/>
            <person name="Pitluck S."/>
            <person name="Chain P."/>
            <person name="Malfatti S."/>
            <person name="Shin M."/>
            <person name="Vergez L."/>
            <person name="Schmutz J."/>
            <person name="Larimer F."/>
            <person name="Land M."/>
            <person name="Hauser L."/>
            <person name="Kyrpides N."/>
            <person name="Kim E."/>
            <person name="LiPuma J.J."/>
            <person name="Gonzalez C.F."/>
            <person name="Konstantinidis K."/>
            <person name="Tiedje J.M."/>
            <person name="Richardson P."/>
        </authorList>
    </citation>
    <scope>NUCLEOTIDE SEQUENCE [LARGE SCALE GENOMIC DNA]</scope>
    <source>
        <strain>HI2424</strain>
    </source>
</reference>